<dbReference type="EMBL" id="AE009949">
    <property type="protein sequence ID" value="AAL98484.1"/>
    <property type="molecule type" value="Genomic_DNA"/>
</dbReference>
<dbReference type="RefSeq" id="WP_002982687.1">
    <property type="nucleotide sequence ID" value="NC_003485.1"/>
</dbReference>
<dbReference type="SMR" id="P67375"/>
<dbReference type="KEGG" id="spm:spyM18_2003"/>
<dbReference type="HOGENOM" id="CLU_048251_4_1_9"/>
<dbReference type="GO" id="GO:0008289">
    <property type="term" value="F:lipid binding"/>
    <property type="evidence" value="ECO:0007669"/>
    <property type="project" value="UniProtKB-KW"/>
</dbReference>
<dbReference type="Gene3D" id="3.30.1180.10">
    <property type="match status" value="1"/>
</dbReference>
<dbReference type="Gene3D" id="2.20.28.50">
    <property type="entry name" value="degv family protein"/>
    <property type="match status" value="1"/>
</dbReference>
<dbReference type="Gene3D" id="3.40.50.10440">
    <property type="entry name" value="Dihydroxyacetone kinase, domain 1"/>
    <property type="match status" value="1"/>
</dbReference>
<dbReference type="InterPro" id="IPR003797">
    <property type="entry name" value="DegV"/>
</dbReference>
<dbReference type="InterPro" id="IPR043168">
    <property type="entry name" value="DegV_C"/>
</dbReference>
<dbReference type="InterPro" id="IPR050270">
    <property type="entry name" value="DegV_domain_contain"/>
</dbReference>
<dbReference type="NCBIfam" id="TIGR00762">
    <property type="entry name" value="DegV"/>
    <property type="match status" value="1"/>
</dbReference>
<dbReference type="PANTHER" id="PTHR33434">
    <property type="entry name" value="DEGV DOMAIN-CONTAINING PROTEIN DR_1986-RELATED"/>
    <property type="match status" value="1"/>
</dbReference>
<dbReference type="PANTHER" id="PTHR33434:SF2">
    <property type="entry name" value="FATTY ACID-BINDING PROTEIN TM_1468"/>
    <property type="match status" value="1"/>
</dbReference>
<dbReference type="Pfam" id="PF02645">
    <property type="entry name" value="DegV"/>
    <property type="match status" value="1"/>
</dbReference>
<dbReference type="SUPFAM" id="SSF82549">
    <property type="entry name" value="DAK1/DegV-like"/>
    <property type="match status" value="1"/>
</dbReference>
<dbReference type="PROSITE" id="PS51482">
    <property type="entry name" value="DEGV"/>
    <property type="match status" value="1"/>
</dbReference>
<gene>
    <name type="ordered locus">spyM18_2003</name>
</gene>
<proteinExistence type="inferred from homology"/>
<comment type="function">
    <text evidence="1">May bind long-chain fatty acids, such as palmitate, and may play a role in lipid transport or fatty acid metabolism.</text>
</comment>
<accession>P67375</accession>
<accession>Q99Y04</accession>
<protein>
    <recommendedName>
        <fullName>DegV domain-containing protein spyM18_2003</fullName>
    </recommendedName>
</protein>
<keyword id="KW-0446">Lipid-binding</keyword>
<evidence type="ECO:0000250" key="1"/>
<evidence type="ECO:0000250" key="2">
    <source>
        <dbReference type="UniProtKB" id="Q9X1H9"/>
    </source>
</evidence>
<evidence type="ECO:0000255" key="3">
    <source>
        <dbReference type="PROSITE-ProRule" id="PRU00815"/>
    </source>
</evidence>
<reference key="1">
    <citation type="journal article" date="2002" name="Proc. Natl. Acad. Sci. U.S.A.">
        <title>Genome sequence and comparative microarray analysis of serotype M18 group A Streptococcus strains associated with acute rheumatic fever outbreaks.</title>
        <authorList>
            <person name="Smoot J.C."/>
            <person name="Barbian K.D."/>
            <person name="Van Gompel J.J."/>
            <person name="Smoot L.M."/>
            <person name="Chaussee M.S."/>
            <person name="Sylva G.L."/>
            <person name="Sturdevant D.E."/>
            <person name="Ricklefs S.M."/>
            <person name="Porcella S.F."/>
            <person name="Parkins L.D."/>
            <person name="Beres S.B."/>
            <person name="Campbell D.S."/>
            <person name="Smith T.M."/>
            <person name="Zhang Q."/>
            <person name="Kapur V."/>
            <person name="Daly J.A."/>
            <person name="Veasy L.G."/>
            <person name="Musser J.M."/>
        </authorList>
    </citation>
    <scope>NUCLEOTIDE SEQUENCE [LARGE SCALE GENOMIC DNA]</scope>
    <source>
        <strain>MGAS8232</strain>
    </source>
</reference>
<organism>
    <name type="scientific">Streptococcus pyogenes serotype M18 (strain MGAS8232)</name>
    <dbReference type="NCBI Taxonomy" id="186103"/>
    <lineage>
        <taxon>Bacteria</taxon>
        <taxon>Bacillati</taxon>
        <taxon>Bacillota</taxon>
        <taxon>Bacilli</taxon>
        <taxon>Lactobacillales</taxon>
        <taxon>Streptococcaceae</taxon>
        <taxon>Streptococcus</taxon>
    </lineage>
</organism>
<feature type="chain" id="PRO_0000209815" description="DegV domain-containing protein spyM18_2003">
    <location>
        <begin position="1"/>
        <end position="286"/>
    </location>
</feature>
<feature type="domain" description="DegV" evidence="3">
    <location>
        <begin position="3"/>
        <end position="282"/>
    </location>
</feature>
<feature type="binding site" evidence="2">
    <location>
        <position position="62"/>
    </location>
    <ligand>
        <name>hexadecanoate</name>
        <dbReference type="ChEBI" id="CHEBI:7896"/>
    </ligand>
</feature>
<feature type="binding site" evidence="2">
    <location>
        <position position="94"/>
    </location>
    <ligand>
        <name>hexadecanoate</name>
        <dbReference type="ChEBI" id="CHEBI:7896"/>
    </ligand>
</feature>
<sequence>MTFTIMTDSTADLNQTWAEDHDIVLIGLTILCDGEVYETVGPNRISSDYLLKKMKAGSHPQTSQINVGEFEKVFREHARNNKALLYLAFSSVLSGTYQSALMARDLVREDYPDAVIEIVDTLAAAGGEGYLTILAAEARDSGKNLLETKDIVEAVIPRLRTYFLVDDLFHLMRGGRLSKGSAFLGSLASIKPLLWIDEEGKLVPIAKIRGRQKAIKEMVAQVEKDIADSTVIVSYTSDQGSAEKLREELLAHENISDVLMMPLGPVISAHVGPNTLAVFVIGQNSR</sequence>
<name>Y2003_STRP8</name>